<evidence type="ECO:0000250" key="1"/>
<evidence type="ECO:0000250" key="2">
    <source>
        <dbReference type="UniProtKB" id="P84808"/>
    </source>
</evidence>
<evidence type="ECO:0000305" key="3"/>
<dbReference type="TCDB" id="8.B.9.1.4">
    <property type="family name" value="the triflin toxin (triflin or crisp) family"/>
</dbReference>
<dbReference type="GO" id="GO:0005576">
    <property type="term" value="C:extracellular region"/>
    <property type="evidence" value="ECO:0007669"/>
    <property type="project" value="UniProtKB-SubCell"/>
</dbReference>
<dbReference type="GO" id="GO:0005246">
    <property type="term" value="F:calcium channel regulator activity"/>
    <property type="evidence" value="ECO:0007669"/>
    <property type="project" value="UniProtKB-KW"/>
</dbReference>
<dbReference type="GO" id="GO:0090729">
    <property type="term" value="F:toxin activity"/>
    <property type="evidence" value="ECO:0007669"/>
    <property type="project" value="UniProtKB-KW"/>
</dbReference>
<dbReference type="Gene3D" id="3.40.33.10">
    <property type="entry name" value="CAP"/>
    <property type="match status" value="1"/>
</dbReference>
<dbReference type="InterPro" id="IPR035940">
    <property type="entry name" value="CAP_sf"/>
</dbReference>
<dbReference type="SUPFAM" id="SSF55797">
    <property type="entry name" value="PR-1-like"/>
    <property type="match status" value="1"/>
</dbReference>
<sequence>PRNPEIQNEIIDLHNYLRRSVNPXASNMLRSQW</sequence>
<reference evidence="3" key="1">
    <citation type="submission" date="1999-08" db="UniProtKB">
        <authorList>
            <person name="Kini M.R."/>
        </authorList>
    </citation>
    <scope>PROTEIN SEQUENCE</scope>
    <source>
        <tissue evidence="3">Venom</tissue>
    </source>
</reference>
<proteinExistence type="evidence at protein level"/>
<comment type="function">
    <text evidence="1">Blocks contraction of smooth muscle elicited by high potassium-induced depolarization, but does not block caffeine-stimulated contraction. May target voltage-gated calcium channels on smooth muscle (By similarity).</text>
</comment>
<comment type="subcellular location">
    <subcellularLocation>
        <location evidence="3">Secreted</location>
    </subcellularLocation>
</comment>
<comment type="tissue specificity">
    <text evidence="3">Expressed by the venom gland.</text>
</comment>
<comment type="PTM">
    <text evidence="2">Contains 8 disulfide bonds.</text>
</comment>
<comment type="similarity">
    <text evidence="3">Belongs to the CRISP family.</text>
</comment>
<keyword id="KW-0108">Calcium channel impairing toxin</keyword>
<keyword id="KW-0903">Direct protein sequencing</keyword>
<keyword id="KW-1015">Disulfide bond</keyword>
<keyword id="KW-0872">Ion channel impairing toxin</keyword>
<keyword id="KW-0528">Neurotoxin</keyword>
<keyword id="KW-0964">Secreted</keyword>
<keyword id="KW-0800">Toxin</keyword>
<name>CRVP_TRIPP</name>
<organism evidence="3">
    <name type="scientific">Trimeresurus purpureomaculatus</name>
    <name type="common">Mangrove pit viper</name>
    <name type="synonym">Cryptelytrops purpureomaculatus</name>
    <dbReference type="NCBI Taxonomy" id="101163"/>
    <lineage>
        <taxon>Eukaryota</taxon>
        <taxon>Metazoa</taxon>
        <taxon>Chordata</taxon>
        <taxon>Craniata</taxon>
        <taxon>Vertebrata</taxon>
        <taxon>Euteleostomi</taxon>
        <taxon>Lepidosauria</taxon>
        <taxon>Squamata</taxon>
        <taxon>Bifurcata</taxon>
        <taxon>Unidentata</taxon>
        <taxon>Episquamata</taxon>
        <taxon>Toxicofera</taxon>
        <taxon>Serpentes</taxon>
        <taxon>Colubroidea</taxon>
        <taxon>Viperidae</taxon>
        <taxon>Crotalinae</taxon>
        <taxon>Trimeresurus</taxon>
    </lineage>
</organism>
<feature type="chain" id="PRO_0000211530" description="Cysteine-rich venom protein tripurin">
    <location>
        <begin position="1"/>
        <end position="33" status="greater than"/>
    </location>
</feature>
<feature type="non-terminal residue" evidence="3">
    <location>
        <position position="33"/>
    </location>
</feature>
<protein>
    <recommendedName>
        <fullName>Cysteine-rich venom protein tripurin</fullName>
        <shortName>CRVP</shortName>
    </recommendedName>
</protein>
<accession>P81995</accession>